<accession>Q5GMY3</accession>
<evidence type="ECO:0000250" key="1">
    <source>
        <dbReference type="UniProtKB" id="M5EAX2"/>
    </source>
</evidence>
<evidence type="ECO:0000255" key="2"/>
<evidence type="ECO:0000255" key="3">
    <source>
        <dbReference type="PIRSR" id="PIRSR000137-1"/>
    </source>
</evidence>
<evidence type="ECO:0000255" key="4">
    <source>
        <dbReference type="PIRSR" id="PIRSR000137-2"/>
    </source>
</evidence>
<evidence type="ECO:0000255" key="5">
    <source>
        <dbReference type="RuleBase" id="RU003968"/>
    </source>
</evidence>
<evidence type="ECO:0000269" key="6">
    <source>
    </source>
</evidence>
<evidence type="ECO:0000305" key="7"/>
<evidence type="ECO:0000312" key="8">
    <source>
        <dbReference type="EMBL" id="CAI43283.4"/>
    </source>
</evidence>
<sequence length="618" mass="66277">MKGIVSWAVVSAALVLSATESLAFANVSSFEKRTTTGNGWDLDGKSYDYVIVGGGTAGLVLANRLSANQGTTVAVIEAGNSGYDDNDKFVVPDANLYNSAVNTQYDWQFHTSSQKHMNNRRASWPRGKVLGGSSAVNGLYYVRPSETEVNVWSKLAGGSGRWSWNSLLSGMKKSEHFRGPVKSVQNQLQIQYNAGSHGSNGPIGTTWPAVTYDPVERFIKTADSMSGAINNDPYNGNNHGTYVALSSIDKTNWQRSFSRNGYLDPISKRSNLHVLTGHTVTGIIFDRSGKNAQATGVHYAASSNEASHTVHANKEVIISGGAINSPQILQLSGIGDKNLLNGLGIDVVVDLPGVGENLQDHVSAGMSFKPKNKKDAGPTSVTGDAKADSYVNSAVSYTSLGKLFNNKDSILGKIQARAKQIADSHNVSPAVKQGQSKAYNALADTIFPSKVSPVEILGNVMFGSISIQAALQHPLSRGSIKITSKDPFAYPKINPNYFAENLDLVLLREGFKLIREMSQQSPLKDVIDFETVPGDKVQTNEDWENWIRSAAGTEYHPSSTCAMLPRGDGGVVDENLKVYGTSNLRVVDASVTPIAMSCHLESVVYGLAEVAADIILGN</sequence>
<protein>
    <recommendedName>
        <fullName evidence="7">GMC oxidoreductase family protein Mala s 12.0101</fullName>
        <ecNumber evidence="7">1.-.-.-</ecNumber>
    </recommendedName>
    <allergenName evidence="7">Mala s 12.0101</allergenName>
</protein>
<proteinExistence type="evidence at protein level"/>
<name>GMCH_MALSM</name>
<organism evidence="8">
    <name type="scientific">Malassezia sympodialis</name>
    <name type="common">Atopic eczema-associated yeast</name>
    <dbReference type="NCBI Taxonomy" id="76777"/>
    <lineage>
        <taxon>Eukaryota</taxon>
        <taxon>Fungi</taxon>
        <taxon>Dikarya</taxon>
        <taxon>Basidiomycota</taxon>
        <taxon>Ustilaginomycotina</taxon>
        <taxon>Malasseziomycetes</taxon>
        <taxon>Malasseziales</taxon>
        <taxon>Malasseziaceae</taxon>
        <taxon>Malassezia</taxon>
    </lineage>
</organism>
<dbReference type="EC" id="1.-.-.-" evidence="7"/>
<dbReference type="EMBL" id="AJ871960">
    <property type="protein sequence ID" value="CAI43283.4"/>
    <property type="molecule type" value="mRNA"/>
</dbReference>
<dbReference type="SMR" id="Q5GMY3"/>
<dbReference type="Allergome" id="2530">
    <property type="allergen name" value="Mala s 12"/>
</dbReference>
<dbReference type="Allergome" id="3367">
    <property type="allergen name" value="Mala s 12.0101"/>
</dbReference>
<dbReference type="VEuPathDB" id="FungiDB:MSYG_3072"/>
<dbReference type="GO" id="GO:0005576">
    <property type="term" value="C:extracellular region"/>
    <property type="evidence" value="ECO:0007669"/>
    <property type="project" value="UniProtKB-SubCell"/>
</dbReference>
<dbReference type="GO" id="GO:0050660">
    <property type="term" value="F:flavin adenine dinucleotide binding"/>
    <property type="evidence" value="ECO:0007669"/>
    <property type="project" value="InterPro"/>
</dbReference>
<dbReference type="GO" id="GO:0008289">
    <property type="term" value="F:lipid binding"/>
    <property type="evidence" value="ECO:0007669"/>
    <property type="project" value="UniProtKB-KW"/>
</dbReference>
<dbReference type="GO" id="GO:0016614">
    <property type="term" value="F:oxidoreductase activity, acting on CH-OH group of donors"/>
    <property type="evidence" value="ECO:0007669"/>
    <property type="project" value="InterPro"/>
</dbReference>
<dbReference type="Gene3D" id="3.50.50.60">
    <property type="entry name" value="FAD/NAD(P)-binding domain"/>
    <property type="match status" value="1"/>
</dbReference>
<dbReference type="Gene3D" id="4.10.450.10">
    <property type="entry name" value="Glucose Oxidase, domain 2"/>
    <property type="match status" value="1"/>
</dbReference>
<dbReference type="Gene3D" id="3.30.560.10">
    <property type="entry name" value="Glucose Oxidase, domain 3"/>
    <property type="match status" value="1"/>
</dbReference>
<dbReference type="InterPro" id="IPR036188">
    <property type="entry name" value="FAD/NAD-bd_sf"/>
</dbReference>
<dbReference type="InterPro" id="IPR027424">
    <property type="entry name" value="Glucose_Oxidase_domain_2"/>
</dbReference>
<dbReference type="InterPro" id="IPR012132">
    <property type="entry name" value="GMC_OxRdtase"/>
</dbReference>
<dbReference type="InterPro" id="IPR000172">
    <property type="entry name" value="GMC_OxRdtase_N"/>
</dbReference>
<dbReference type="InterPro" id="IPR007867">
    <property type="entry name" value="GMC_OxRtase_C"/>
</dbReference>
<dbReference type="PANTHER" id="PTHR11552">
    <property type="entry name" value="GLUCOSE-METHANOL-CHOLINE GMC OXIDOREDUCTASE"/>
    <property type="match status" value="1"/>
</dbReference>
<dbReference type="PANTHER" id="PTHR11552:SF218">
    <property type="entry name" value="GLUCOSE-METHANOL-CHOLINE OXIDOREDUCTASE N-TERMINAL DOMAIN-CONTAINING PROTEIN"/>
    <property type="match status" value="1"/>
</dbReference>
<dbReference type="Pfam" id="PF05199">
    <property type="entry name" value="GMC_oxred_C"/>
    <property type="match status" value="1"/>
</dbReference>
<dbReference type="Pfam" id="PF00732">
    <property type="entry name" value="GMC_oxred_N"/>
    <property type="match status" value="1"/>
</dbReference>
<dbReference type="PIRSF" id="PIRSF000137">
    <property type="entry name" value="Alcohol_oxidase"/>
    <property type="match status" value="1"/>
</dbReference>
<dbReference type="SUPFAM" id="SSF54373">
    <property type="entry name" value="FAD-linked reductases, C-terminal domain"/>
    <property type="match status" value="1"/>
</dbReference>
<dbReference type="SUPFAM" id="SSF51905">
    <property type="entry name" value="FAD/NAD(P)-binding domain"/>
    <property type="match status" value="1"/>
</dbReference>
<dbReference type="PROSITE" id="PS00623">
    <property type="entry name" value="GMC_OXRED_1"/>
    <property type="match status" value="1"/>
</dbReference>
<dbReference type="PROSITE" id="PS00624">
    <property type="entry name" value="GMC_OXRED_2"/>
    <property type="match status" value="1"/>
</dbReference>
<comment type="function">
    <text evidence="6">The recombinant protein is not active with choline, glucose, myo-inositol, methanol, ethanol, 1-pentanol, benzyl alcohol, 2-phenylethanol, cholesterol or lauryl alcohol as substrates. Binds membrane lipids including phosphatidylinositol (PtdIns)(4)-phosphate (P), PtdIns(4,5)P2, phosphatidic acid (PA), and to a lower extent PtdIns(3,4,5)P3, cardiolipin and 3-sulfogalactosyl ceramide (sulfatide).</text>
</comment>
<comment type="cofactor">
    <cofactor evidence="4 6">
        <name>FAD</name>
        <dbReference type="ChEBI" id="CHEBI:57692"/>
    </cofactor>
    <text evidence="6">Binds 1 FAD per subunit.</text>
</comment>
<comment type="subunit">
    <text evidence="6">Monomer.</text>
</comment>
<comment type="subcellular location">
    <subcellularLocation>
        <location evidence="1">Secreted</location>
    </subcellularLocation>
</comment>
<comment type="allergen">
    <text evidence="6">Causes an allergic reaction in human. Recombinant protein binds to IgE in 62% of the 21 atopic eczema patients tested allergic to M.sympodialis.</text>
</comment>
<comment type="similarity">
    <text evidence="5">Belongs to the GMC oxidoreductase family.</text>
</comment>
<feature type="signal peptide" evidence="2">
    <location>
        <begin position="1"/>
        <end position="23"/>
    </location>
</feature>
<feature type="chain" id="PRO_5004256853" description="GMC oxidoreductase family protein Mala s 12.0101" evidence="2">
    <location>
        <begin position="24"/>
        <end position="618"/>
    </location>
</feature>
<feature type="active site" description="Proton donor" evidence="3">
    <location>
        <position position="556"/>
    </location>
</feature>
<feature type="active site" description="Proton acceptor" evidence="3">
    <location>
        <position position="599"/>
    </location>
</feature>
<feature type="binding site" evidence="4">
    <location>
        <position position="129"/>
    </location>
    <ligand>
        <name>FAD</name>
        <dbReference type="ChEBI" id="CHEBI:57692"/>
    </ligand>
</feature>
<feature type="binding site" evidence="4">
    <location>
        <position position="280"/>
    </location>
    <ligand>
        <name>FAD</name>
        <dbReference type="ChEBI" id="CHEBI:57692"/>
    </ligand>
</feature>
<keyword id="KW-0020">Allergen</keyword>
<keyword id="KW-0274">FAD</keyword>
<keyword id="KW-0285">Flavoprotein</keyword>
<keyword id="KW-0446">Lipid-binding</keyword>
<keyword id="KW-0560">Oxidoreductase</keyword>
<keyword id="KW-0964">Secreted</keyword>
<keyword id="KW-0732">Signal</keyword>
<reference evidence="8" key="1">
    <citation type="journal article" date="2007" name="Allergy">
        <title>Mala s 12 is a major allergen in patients with atopic eczema and has sequence similarities to the GMC oxidoreductase family.</title>
        <authorList>
            <person name="Zargari A."/>
            <person name="Selander C."/>
            <person name="Rasool O."/>
            <person name="Ghanem M."/>
            <person name="Gadda G."/>
            <person name="Crameri R."/>
            <person name="Scheynius A."/>
        </authorList>
    </citation>
    <scope>NUCLEOTIDE SEQUENCE [MRNA]</scope>
    <scope>FUNCTION</scope>
    <scope>COFACTOR</scope>
    <scope>SUBUNIT</scope>
    <scope>ALLERGEN</scope>
</reference>